<accession>Q9DCC4</accession>
<accession>Q8R0P9</accession>
<accession>Q9D0X2</accession>
<sequence length="274" mass="28721">MAATMSEPRRVGFVGAGRMAEAIARGLIQAGKVEAKQVLASAPTDNNLCHFRALGCQTTHSNHEVLQNCPLVIFATKPQVLPTVLAEVAPIVTTEHIIVSVAAGISLSTMEGLLPPNTRVLRVSPNLPCVVQEGAMVMARGHHAGNDDAELLQNLLEACGQCIEVPESYVDIHTGLSGSGVAFVCTFSEALAEGAIKMGMPSGLAHRIAAQTLLGTAKMLQQEGKHPAQLRTDVLTPAGTTIHGLHALERGGFRAATMSAVEAATCRAKELSKK</sequence>
<organism>
    <name type="scientific">Mus musculus</name>
    <name type="common">Mouse</name>
    <dbReference type="NCBI Taxonomy" id="10090"/>
    <lineage>
        <taxon>Eukaryota</taxon>
        <taxon>Metazoa</taxon>
        <taxon>Chordata</taxon>
        <taxon>Craniata</taxon>
        <taxon>Vertebrata</taxon>
        <taxon>Euteleostomi</taxon>
        <taxon>Mammalia</taxon>
        <taxon>Eutheria</taxon>
        <taxon>Euarchontoglires</taxon>
        <taxon>Glires</taxon>
        <taxon>Rodentia</taxon>
        <taxon>Myomorpha</taxon>
        <taxon>Muroidea</taxon>
        <taxon>Muridae</taxon>
        <taxon>Murinae</taxon>
        <taxon>Mus</taxon>
        <taxon>Mus</taxon>
    </lineage>
</organism>
<comment type="function">
    <text evidence="2">Oxidoreductase that catalyzes the last step in proline biosynthesis, which corresponds to the reduction of pyrroline-5-carboxylate (P5C) to L-proline using NAD(P)H. Proline is synthesized from either glutamate or ornithine; both are converted to P5C, and then to proline via pyrroline-5-carboxylate reductases (PYCRs). PYCR3 is exclusively linked to the biosynthesis of proline from ornithine.</text>
</comment>
<comment type="catalytic activity">
    <reaction evidence="2">
        <text>L-proline + NADP(+) = (S)-1-pyrroline-5-carboxylate + NADPH + 2 H(+)</text>
        <dbReference type="Rhea" id="RHEA:14109"/>
        <dbReference type="ChEBI" id="CHEBI:15378"/>
        <dbReference type="ChEBI" id="CHEBI:17388"/>
        <dbReference type="ChEBI" id="CHEBI:57783"/>
        <dbReference type="ChEBI" id="CHEBI:58349"/>
        <dbReference type="ChEBI" id="CHEBI:60039"/>
        <dbReference type="EC" id="1.5.1.2"/>
    </reaction>
    <physiologicalReaction direction="right-to-left" evidence="2">
        <dbReference type="Rhea" id="RHEA:14111"/>
    </physiologicalReaction>
</comment>
<comment type="catalytic activity">
    <reaction evidence="2">
        <text>L-proline + NAD(+) = (S)-1-pyrroline-5-carboxylate + NADH + 2 H(+)</text>
        <dbReference type="Rhea" id="RHEA:14105"/>
        <dbReference type="ChEBI" id="CHEBI:15378"/>
        <dbReference type="ChEBI" id="CHEBI:17388"/>
        <dbReference type="ChEBI" id="CHEBI:57540"/>
        <dbReference type="ChEBI" id="CHEBI:57945"/>
        <dbReference type="ChEBI" id="CHEBI:60039"/>
        <dbReference type="EC" id="1.5.1.2"/>
    </reaction>
    <physiologicalReaction direction="right-to-left" evidence="2">
        <dbReference type="Rhea" id="RHEA:14107"/>
    </physiologicalReaction>
</comment>
<comment type="pathway">
    <text evidence="2">Amino-acid biosynthesis; L-proline biosynthesis; L-proline from L-glutamate 5-semialdehyde: step 1/1.</text>
</comment>
<comment type="subunit">
    <text evidence="1">Homodecamer; composed of 5 homodimers.</text>
</comment>
<comment type="subcellular location">
    <subcellularLocation>
        <location evidence="2">Cytoplasm</location>
    </subcellularLocation>
</comment>
<comment type="similarity">
    <text evidence="3">Belongs to the pyrroline-5-carboxylate reductase family.</text>
</comment>
<comment type="sequence caution" evidence="3">
    <conflict type="frameshift">
        <sequence resource="EMBL-CDS" id="BAB23252"/>
    </conflict>
</comment>
<name>P5CR3_MOUSE</name>
<gene>
    <name evidence="2" type="primary">Pycr3</name>
    <name type="synonym">Pycrl</name>
</gene>
<proteinExistence type="evidence at protein level"/>
<keyword id="KW-0007">Acetylation</keyword>
<keyword id="KW-0028">Amino-acid biosynthesis</keyword>
<keyword id="KW-0963">Cytoplasm</keyword>
<keyword id="KW-0521">NADP</keyword>
<keyword id="KW-0560">Oxidoreductase</keyword>
<keyword id="KW-0641">Proline biosynthesis</keyword>
<keyword id="KW-1185">Reference proteome</keyword>
<feature type="initiator methionine" description="Removed" evidence="2">
    <location>
        <position position="1"/>
    </location>
</feature>
<feature type="chain" id="PRO_0000324563" description="Pyrroline-5-carboxylate reductase 3">
    <location>
        <begin position="2"/>
        <end position="274"/>
    </location>
</feature>
<feature type="modified residue" description="N-acetylalanine" evidence="2">
    <location>
        <position position="2"/>
    </location>
</feature>
<feature type="sequence conflict" description="In Ref. 1; BAB23252." evidence="3" ref="1">
    <original>T</original>
    <variation>N</variation>
    <location>
        <position position="59"/>
    </location>
</feature>
<feature type="sequence conflict" description="In Ref. 1; BAB22451." evidence="3" ref="1">
    <original>N</original>
    <variation>S</variation>
    <location>
        <position position="68"/>
    </location>
</feature>
<feature type="sequence conflict" description="In Ref. 1; BAB23252." evidence="3" ref="1">
    <original>VT</original>
    <variation>IN</variation>
    <location>
        <begin position="92"/>
        <end position="93"/>
    </location>
</feature>
<feature type="sequence conflict" description="In Ref. 1; BAB23252." evidence="3" ref="1">
    <original>LSTM</original>
    <variation>HGTK</variation>
    <location>
        <begin position="107"/>
        <end position="110"/>
    </location>
</feature>
<feature type="sequence conflict" description="In Ref. 1; BAB23252." evidence="3" ref="1">
    <original>V</original>
    <variation>A</variation>
    <location>
        <position position="120"/>
    </location>
</feature>
<feature type="sequence conflict" description="In Ref. 1; BAB23252." evidence="3" ref="1">
    <original>P</original>
    <variation>T</variation>
    <location>
        <position position="128"/>
    </location>
</feature>
<feature type="sequence conflict" description="In Ref. 1; BAB23252." evidence="3" ref="1">
    <original>L</original>
    <variation>I</variation>
    <location>
        <position position="152"/>
    </location>
</feature>
<feature type="sequence conflict" description="In Ref. 1; BAB23252." evidence="3" ref="1">
    <original>E</original>
    <variation>K</variation>
    <location>
        <position position="164"/>
    </location>
</feature>
<feature type="sequence conflict" description="In Ref. 1; BAB23252." evidence="3" ref="1">
    <original>A</original>
    <variation>G</variation>
    <location>
        <position position="190"/>
    </location>
</feature>
<feature type="sequence conflict" description="In Ref. 1; BAB23252." evidence="3" ref="1">
    <original>M</original>
    <variation>I</variation>
    <location>
        <position position="198"/>
    </location>
</feature>
<feature type="sequence conflict" description="In Ref. 1; BAB23252." evidence="3" ref="1">
    <original>A</original>
    <variation>V</variation>
    <location>
        <position position="268"/>
    </location>
</feature>
<reference key="1">
    <citation type="journal article" date="2005" name="Science">
        <title>The transcriptional landscape of the mammalian genome.</title>
        <authorList>
            <person name="Carninci P."/>
            <person name="Kasukawa T."/>
            <person name="Katayama S."/>
            <person name="Gough J."/>
            <person name="Frith M.C."/>
            <person name="Maeda N."/>
            <person name="Oyama R."/>
            <person name="Ravasi T."/>
            <person name="Lenhard B."/>
            <person name="Wells C."/>
            <person name="Kodzius R."/>
            <person name="Shimokawa K."/>
            <person name="Bajic V.B."/>
            <person name="Brenner S.E."/>
            <person name="Batalov S."/>
            <person name="Forrest A.R."/>
            <person name="Zavolan M."/>
            <person name="Davis M.J."/>
            <person name="Wilming L.G."/>
            <person name="Aidinis V."/>
            <person name="Allen J.E."/>
            <person name="Ambesi-Impiombato A."/>
            <person name="Apweiler R."/>
            <person name="Aturaliya R.N."/>
            <person name="Bailey T.L."/>
            <person name="Bansal M."/>
            <person name="Baxter L."/>
            <person name="Beisel K.W."/>
            <person name="Bersano T."/>
            <person name="Bono H."/>
            <person name="Chalk A.M."/>
            <person name="Chiu K.P."/>
            <person name="Choudhary V."/>
            <person name="Christoffels A."/>
            <person name="Clutterbuck D.R."/>
            <person name="Crowe M.L."/>
            <person name="Dalla E."/>
            <person name="Dalrymple B.P."/>
            <person name="de Bono B."/>
            <person name="Della Gatta G."/>
            <person name="di Bernardo D."/>
            <person name="Down T."/>
            <person name="Engstrom P."/>
            <person name="Fagiolini M."/>
            <person name="Faulkner G."/>
            <person name="Fletcher C.F."/>
            <person name="Fukushima T."/>
            <person name="Furuno M."/>
            <person name="Futaki S."/>
            <person name="Gariboldi M."/>
            <person name="Georgii-Hemming P."/>
            <person name="Gingeras T.R."/>
            <person name="Gojobori T."/>
            <person name="Green R.E."/>
            <person name="Gustincich S."/>
            <person name="Harbers M."/>
            <person name="Hayashi Y."/>
            <person name="Hensch T.K."/>
            <person name="Hirokawa N."/>
            <person name="Hill D."/>
            <person name="Huminiecki L."/>
            <person name="Iacono M."/>
            <person name="Ikeo K."/>
            <person name="Iwama A."/>
            <person name="Ishikawa T."/>
            <person name="Jakt M."/>
            <person name="Kanapin A."/>
            <person name="Katoh M."/>
            <person name="Kawasawa Y."/>
            <person name="Kelso J."/>
            <person name="Kitamura H."/>
            <person name="Kitano H."/>
            <person name="Kollias G."/>
            <person name="Krishnan S.P."/>
            <person name="Kruger A."/>
            <person name="Kummerfeld S.K."/>
            <person name="Kurochkin I.V."/>
            <person name="Lareau L.F."/>
            <person name="Lazarevic D."/>
            <person name="Lipovich L."/>
            <person name="Liu J."/>
            <person name="Liuni S."/>
            <person name="McWilliam S."/>
            <person name="Madan Babu M."/>
            <person name="Madera M."/>
            <person name="Marchionni L."/>
            <person name="Matsuda H."/>
            <person name="Matsuzawa S."/>
            <person name="Miki H."/>
            <person name="Mignone F."/>
            <person name="Miyake S."/>
            <person name="Morris K."/>
            <person name="Mottagui-Tabar S."/>
            <person name="Mulder N."/>
            <person name="Nakano N."/>
            <person name="Nakauchi H."/>
            <person name="Ng P."/>
            <person name="Nilsson R."/>
            <person name="Nishiguchi S."/>
            <person name="Nishikawa S."/>
            <person name="Nori F."/>
            <person name="Ohara O."/>
            <person name="Okazaki Y."/>
            <person name="Orlando V."/>
            <person name="Pang K.C."/>
            <person name="Pavan W.J."/>
            <person name="Pavesi G."/>
            <person name="Pesole G."/>
            <person name="Petrovsky N."/>
            <person name="Piazza S."/>
            <person name="Reed J."/>
            <person name="Reid J.F."/>
            <person name="Ring B.Z."/>
            <person name="Ringwald M."/>
            <person name="Rost B."/>
            <person name="Ruan Y."/>
            <person name="Salzberg S.L."/>
            <person name="Sandelin A."/>
            <person name="Schneider C."/>
            <person name="Schoenbach C."/>
            <person name="Sekiguchi K."/>
            <person name="Semple C.A."/>
            <person name="Seno S."/>
            <person name="Sessa L."/>
            <person name="Sheng Y."/>
            <person name="Shibata Y."/>
            <person name="Shimada H."/>
            <person name="Shimada K."/>
            <person name="Silva D."/>
            <person name="Sinclair B."/>
            <person name="Sperling S."/>
            <person name="Stupka E."/>
            <person name="Sugiura K."/>
            <person name="Sultana R."/>
            <person name="Takenaka Y."/>
            <person name="Taki K."/>
            <person name="Tammoja K."/>
            <person name="Tan S.L."/>
            <person name="Tang S."/>
            <person name="Taylor M.S."/>
            <person name="Tegner J."/>
            <person name="Teichmann S.A."/>
            <person name="Ueda H.R."/>
            <person name="van Nimwegen E."/>
            <person name="Verardo R."/>
            <person name="Wei C.L."/>
            <person name="Yagi K."/>
            <person name="Yamanishi H."/>
            <person name="Zabarovsky E."/>
            <person name="Zhu S."/>
            <person name="Zimmer A."/>
            <person name="Hide W."/>
            <person name="Bult C."/>
            <person name="Grimmond S.M."/>
            <person name="Teasdale R.D."/>
            <person name="Liu E.T."/>
            <person name="Brusic V."/>
            <person name="Quackenbush J."/>
            <person name="Wahlestedt C."/>
            <person name="Mattick J.S."/>
            <person name="Hume D.A."/>
            <person name="Kai C."/>
            <person name="Sasaki D."/>
            <person name="Tomaru Y."/>
            <person name="Fukuda S."/>
            <person name="Kanamori-Katayama M."/>
            <person name="Suzuki M."/>
            <person name="Aoki J."/>
            <person name="Arakawa T."/>
            <person name="Iida J."/>
            <person name="Imamura K."/>
            <person name="Itoh M."/>
            <person name="Kato T."/>
            <person name="Kawaji H."/>
            <person name="Kawagashira N."/>
            <person name="Kawashima T."/>
            <person name="Kojima M."/>
            <person name="Kondo S."/>
            <person name="Konno H."/>
            <person name="Nakano K."/>
            <person name="Ninomiya N."/>
            <person name="Nishio T."/>
            <person name="Okada M."/>
            <person name="Plessy C."/>
            <person name="Shibata K."/>
            <person name="Shiraki T."/>
            <person name="Suzuki S."/>
            <person name="Tagami M."/>
            <person name="Waki K."/>
            <person name="Watahiki A."/>
            <person name="Okamura-Oho Y."/>
            <person name="Suzuki H."/>
            <person name="Kawai J."/>
            <person name="Hayashizaki Y."/>
        </authorList>
    </citation>
    <scope>NUCLEOTIDE SEQUENCE [LARGE SCALE MRNA]</scope>
    <source>
        <strain>C57BL/6J</strain>
        <tissue>Kidney</tissue>
    </source>
</reference>
<reference key="2">
    <citation type="journal article" date="2004" name="Genome Res.">
        <title>The status, quality, and expansion of the NIH full-length cDNA project: the Mammalian Gene Collection (MGC).</title>
        <authorList>
            <consortium name="The MGC Project Team"/>
        </authorList>
    </citation>
    <scope>NUCLEOTIDE SEQUENCE [LARGE SCALE MRNA]</scope>
    <source>
        <strain>FVB/N</strain>
        <tissue>Colon</tissue>
    </source>
</reference>
<reference key="3">
    <citation type="journal article" date="2010" name="Cell">
        <title>A tissue-specific atlas of mouse protein phosphorylation and expression.</title>
        <authorList>
            <person name="Huttlin E.L."/>
            <person name="Jedrychowski M.P."/>
            <person name="Elias J.E."/>
            <person name="Goswami T."/>
            <person name="Rad R."/>
            <person name="Beausoleil S.A."/>
            <person name="Villen J."/>
            <person name="Haas W."/>
            <person name="Sowa M.E."/>
            <person name="Gygi S.P."/>
        </authorList>
    </citation>
    <scope>IDENTIFICATION BY MASS SPECTROMETRY [LARGE SCALE ANALYSIS]</scope>
    <source>
        <tissue>Brain</tissue>
        <tissue>Brown adipose tissue</tissue>
        <tissue>Heart</tissue>
        <tissue>Kidney</tissue>
        <tissue>Liver</tissue>
        <tissue>Lung</tissue>
        <tissue>Pancreas</tissue>
        <tissue>Spleen</tissue>
    </source>
</reference>
<dbReference type="EC" id="1.5.1.2" evidence="2"/>
<dbReference type="EMBL" id="AK002912">
    <property type="protein sequence ID" value="BAB22451.1"/>
    <property type="molecule type" value="mRNA"/>
</dbReference>
<dbReference type="EMBL" id="AK004291">
    <property type="protein sequence ID" value="BAB23252.1"/>
    <property type="status" value="ALT_FRAME"/>
    <property type="molecule type" value="mRNA"/>
</dbReference>
<dbReference type="EMBL" id="BC026536">
    <property type="protein sequence ID" value="AAH26536.1"/>
    <property type="molecule type" value="mRNA"/>
</dbReference>
<dbReference type="CCDS" id="CCDS37109.1"/>
<dbReference type="RefSeq" id="NP_079688.2">
    <property type="nucleotide sequence ID" value="NM_025412.3"/>
</dbReference>
<dbReference type="SMR" id="Q9DCC4"/>
<dbReference type="BioGRID" id="211286">
    <property type="interactions" value="19"/>
</dbReference>
<dbReference type="FunCoup" id="Q9DCC4">
    <property type="interactions" value="243"/>
</dbReference>
<dbReference type="IntAct" id="Q9DCC4">
    <property type="interactions" value="2"/>
</dbReference>
<dbReference type="MINT" id="Q9DCC4"/>
<dbReference type="STRING" id="10090.ENSMUSP00000049605"/>
<dbReference type="iPTMnet" id="Q9DCC4"/>
<dbReference type="PhosphoSitePlus" id="Q9DCC4"/>
<dbReference type="SwissPalm" id="Q9DCC4"/>
<dbReference type="REPRODUCTION-2DPAGE" id="IPI00153234"/>
<dbReference type="REPRODUCTION-2DPAGE" id="Q9DCC4"/>
<dbReference type="jPOST" id="Q9DCC4"/>
<dbReference type="PaxDb" id="10090-ENSMUSP00000049605"/>
<dbReference type="PeptideAtlas" id="Q9DCC4"/>
<dbReference type="ProteomicsDB" id="287756"/>
<dbReference type="Pumba" id="Q9DCC4"/>
<dbReference type="Antibodypedia" id="28003">
    <property type="antibodies" value="215 antibodies from 21 providers"/>
</dbReference>
<dbReference type="DNASU" id="66194"/>
<dbReference type="Ensembl" id="ENSMUST00000053918.9">
    <property type="protein sequence ID" value="ENSMUSP00000049605.8"/>
    <property type="gene ID" value="ENSMUSG00000022571.10"/>
</dbReference>
<dbReference type="GeneID" id="66194"/>
<dbReference type="KEGG" id="mmu:66194"/>
<dbReference type="UCSC" id="uc007whq.1">
    <property type="organism name" value="mouse"/>
</dbReference>
<dbReference type="AGR" id="MGI:1913444"/>
<dbReference type="CTD" id="65263"/>
<dbReference type="MGI" id="MGI:1913444">
    <property type="gene designation" value="Pycr3"/>
</dbReference>
<dbReference type="VEuPathDB" id="HostDB:ENSMUSG00000022571"/>
<dbReference type="eggNOG" id="KOG3124">
    <property type="taxonomic scope" value="Eukaryota"/>
</dbReference>
<dbReference type="GeneTree" id="ENSGT00950000183044"/>
<dbReference type="HOGENOM" id="CLU_042344_3_1_1"/>
<dbReference type="InParanoid" id="Q9DCC4"/>
<dbReference type="OMA" id="AKQTCLG"/>
<dbReference type="OrthoDB" id="10263291at2759"/>
<dbReference type="PhylomeDB" id="Q9DCC4"/>
<dbReference type="Reactome" id="R-MMU-8964539">
    <property type="pathway name" value="Glutamate and glutamine metabolism"/>
</dbReference>
<dbReference type="UniPathway" id="UPA00098">
    <property type="reaction ID" value="UER00361"/>
</dbReference>
<dbReference type="BioGRID-ORCS" id="66194">
    <property type="hits" value="1 hit in 80 CRISPR screens"/>
</dbReference>
<dbReference type="CD-CODE" id="CE726F99">
    <property type="entry name" value="Postsynaptic density"/>
</dbReference>
<dbReference type="PRO" id="PR:Q9DCC4"/>
<dbReference type="Proteomes" id="UP000000589">
    <property type="component" value="Chromosome 15"/>
</dbReference>
<dbReference type="RNAct" id="Q9DCC4">
    <property type="molecule type" value="protein"/>
</dbReference>
<dbReference type="Bgee" id="ENSMUSG00000022571">
    <property type="expression patterns" value="Expressed in yolk sac and 251 other cell types or tissues"/>
</dbReference>
<dbReference type="GO" id="GO:0005829">
    <property type="term" value="C:cytosol"/>
    <property type="evidence" value="ECO:0000250"/>
    <property type="project" value="UniProtKB"/>
</dbReference>
<dbReference type="GO" id="GO:0045171">
    <property type="term" value="C:intercellular bridge"/>
    <property type="evidence" value="ECO:0007669"/>
    <property type="project" value="Ensembl"/>
</dbReference>
<dbReference type="GO" id="GO:0072686">
    <property type="term" value="C:mitotic spindle"/>
    <property type="evidence" value="ECO:0007669"/>
    <property type="project" value="Ensembl"/>
</dbReference>
<dbReference type="GO" id="GO:0004126">
    <property type="term" value="F:cytidine deaminase activity"/>
    <property type="evidence" value="ECO:0000266"/>
    <property type="project" value="MGI"/>
</dbReference>
<dbReference type="GO" id="GO:0042802">
    <property type="term" value="F:identical protein binding"/>
    <property type="evidence" value="ECO:0000353"/>
    <property type="project" value="MGI"/>
</dbReference>
<dbReference type="GO" id="GO:0004735">
    <property type="term" value="F:pyrroline-5-carboxylate reductase activity"/>
    <property type="evidence" value="ECO:0000250"/>
    <property type="project" value="UniProtKB"/>
</dbReference>
<dbReference type="GO" id="GO:0009972">
    <property type="term" value="P:cytidine deamination"/>
    <property type="evidence" value="ECO:0000266"/>
    <property type="project" value="MGI"/>
</dbReference>
<dbReference type="GO" id="GO:0055129">
    <property type="term" value="P:L-proline biosynthetic process"/>
    <property type="evidence" value="ECO:0000250"/>
    <property type="project" value="UniProtKB"/>
</dbReference>
<dbReference type="FunFam" id="3.40.50.720:FF:000367">
    <property type="entry name" value="Pyrroline-5-carboxylate reductase"/>
    <property type="match status" value="1"/>
</dbReference>
<dbReference type="FunFam" id="1.10.3730.10:FF:000003">
    <property type="entry name" value="Pyrroline-5-carboxylate reductase 1, mitochondrial"/>
    <property type="match status" value="1"/>
</dbReference>
<dbReference type="Gene3D" id="3.40.50.720">
    <property type="entry name" value="NAD(P)-binding Rossmann-like Domain"/>
    <property type="match status" value="1"/>
</dbReference>
<dbReference type="Gene3D" id="1.10.3730.10">
    <property type="entry name" value="ProC C-terminal domain-like"/>
    <property type="match status" value="1"/>
</dbReference>
<dbReference type="HAMAP" id="MF_01925">
    <property type="entry name" value="P5C_reductase"/>
    <property type="match status" value="1"/>
</dbReference>
<dbReference type="InterPro" id="IPR008927">
    <property type="entry name" value="6-PGluconate_DH-like_C_sf"/>
</dbReference>
<dbReference type="InterPro" id="IPR036291">
    <property type="entry name" value="NAD(P)-bd_dom_sf"/>
</dbReference>
<dbReference type="InterPro" id="IPR028939">
    <property type="entry name" value="P5C_Rdtase_cat_N"/>
</dbReference>
<dbReference type="InterPro" id="IPR029036">
    <property type="entry name" value="P5CR_dimer"/>
</dbReference>
<dbReference type="InterPro" id="IPR000304">
    <property type="entry name" value="Pyrroline-COOH_reductase"/>
</dbReference>
<dbReference type="NCBIfam" id="TIGR00112">
    <property type="entry name" value="proC"/>
    <property type="match status" value="1"/>
</dbReference>
<dbReference type="PANTHER" id="PTHR11645">
    <property type="entry name" value="PYRROLINE-5-CARBOXYLATE REDUCTASE"/>
    <property type="match status" value="1"/>
</dbReference>
<dbReference type="PANTHER" id="PTHR11645:SF0">
    <property type="entry name" value="PYRROLINE-5-CARBOXYLATE REDUCTASE 3"/>
    <property type="match status" value="1"/>
</dbReference>
<dbReference type="Pfam" id="PF03807">
    <property type="entry name" value="F420_oxidored"/>
    <property type="match status" value="1"/>
</dbReference>
<dbReference type="Pfam" id="PF14748">
    <property type="entry name" value="P5CR_dimer"/>
    <property type="match status" value="1"/>
</dbReference>
<dbReference type="PIRSF" id="PIRSF000193">
    <property type="entry name" value="Pyrrol-5-carb_rd"/>
    <property type="match status" value="1"/>
</dbReference>
<dbReference type="SUPFAM" id="SSF48179">
    <property type="entry name" value="6-phosphogluconate dehydrogenase C-terminal domain-like"/>
    <property type="match status" value="1"/>
</dbReference>
<dbReference type="SUPFAM" id="SSF51735">
    <property type="entry name" value="NAD(P)-binding Rossmann-fold domains"/>
    <property type="match status" value="1"/>
</dbReference>
<evidence type="ECO:0000250" key="1">
    <source>
        <dbReference type="UniProtKB" id="P32322"/>
    </source>
</evidence>
<evidence type="ECO:0000250" key="2">
    <source>
        <dbReference type="UniProtKB" id="Q53H96"/>
    </source>
</evidence>
<evidence type="ECO:0000305" key="3"/>
<protein>
    <recommendedName>
        <fullName evidence="2">Pyrroline-5-carboxylate reductase 3</fullName>
        <shortName>P5C reductase 3</shortName>
        <shortName>P5CR 3</shortName>
        <ecNumber evidence="2">1.5.1.2</ecNumber>
    </recommendedName>
    <alternativeName>
        <fullName>Pyrroline-5-carboxylate reductase-like protein</fullName>
    </alternativeName>
</protein>